<organism>
    <name type="scientific">Mycobacterium marinum (strain ATCC BAA-535 / M)</name>
    <dbReference type="NCBI Taxonomy" id="216594"/>
    <lineage>
        <taxon>Bacteria</taxon>
        <taxon>Bacillati</taxon>
        <taxon>Actinomycetota</taxon>
        <taxon>Actinomycetes</taxon>
        <taxon>Mycobacteriales</taxon>
        <taxon>Mycobacteriaceae</taxon>
        <taxon>Mycobacterium</taxon>
        <taxon>Mycobacterium ulcerans group</taxon>
    </lineage>
</organism>
<accession>B2HEC3</accession>
<proteinExistence type="inferred from homology"/>
<feature type="chain" id="PRO_1000096074" description="Bifunctional purine biosynthesis protein PurH">
    <location>
        <begin position="1"/>
        <end position="523"/>
    </location>
</feature>
<feature type="domain" description="MGS-like" evidence="2">
    <location>
        <begin position="4"/>
        <end position="152"/>
    </location>
</feature>
<evidence type="ECO:0000255" key="1">
    <source>
        <dbReference type="HAMAP-Rule" id="MF_00139"/>
    </source>
</evidence>
<evidence type="ECO:0000255" key="2">
    <source>
        <dbReference type="PROSITE-ProRule" id="PRU01202"/>
    </source>
</evidence>
<reference key="1">
    <citation type="journal article" date="2008" name="Genome Res.">
        <title>Insights from the complete genome sequence of Mycobacterium marinum on the evolution of Mycobacterium tuberculosis.</title>
        <authorList>
            <person name="Stinear T.P."/>
            <person name="Seemann T."/>
            <person name="Harrison P.F."/>
            <person name="Jenkin G.A."/>
            <person name="Davies J.K."/>
            <person name="Johnson P.D."/>
            <person name="Abdellah Z."/>
            <person name="Arrowsmith C."/>
            <person name="Chillingworth T."/>
            <person name="Churcher C."/>
            <person name="Clarke K."/>
            <person name="Cronin A."/>
            <person name="Davis P."/>
            <person name="Goodhead I."/>
            <person name="Holroyd N."/>
            <person name="Jagels K."/>
            <person name="Lord A."/>
            <person name="Moule S."/>
            <person name="Mungall K."/>
            <person name="Norbertczak H."/>
            <person name="Quail M.A."/>
            <person name="Rabbinowitsch E."/>
            <person name="Walker D."/>
            <person name="White B."/>
            <person name="Whitehead S."/>
            <person name="Small P.L."/>
            <person name="Brosch R."/>
            <person name="Ramakrishnan L."/>
            <person name="Fischbach M.A."/>
            <person name="Parkhill J."/>
            <person name="Cole S.T."/>
        </authorList>
    </citation>
    <scope>NUCLEOTIDE SEQUENCE [LARGE SCALE GENOMIC DNA]</scope>
    <source>
        <strain>ATCC BAA-535 / M</strain>
    </source>
</reference>
<protein>
    <recommendedName>
        <fullName evidence="1">Bifunctional purine biosynthesis protein PurH</fullName>
    </recommendedName>
    <domain>
        <recommendedName>
            <fullName evidence="1">Phosphoribosylaminoimidazolecarboxamide formyltransferase</fullName>
            <ecNumber evidence="1">2.1.2.3</ecNumber>
        </recommendedName>
        <alternativeName>
            <fullName evidence="1">AICAR transformylase</fullName>
        </alternativeName>
    </domain>
    <domain>
        <recommendedName>
            <fullName evidence="1">IMP cyclohydrolase</fullName>
            <ecNumber evidence="1">3.5.4.10</ecNumber>
        </recommendedName>
        <alternativeName>
            <fullName evidence="1">ATIC</fullName>
        </alternativeName>
        <alternativeName>
            <fullName evidence="1">IMP synthase</fullName>
        </alternativeName>
        <alternativeName>
            <fullName evidence="1">Inosinicase</fullName>
        </alternativeName>
    </domain>
</protein>
<keyword id="KW-0378">Hydrolase</keyword>
<keyword id="KW-0511">Multifunctional enzyme</keyword>
<keyword id="KW-0658">Purine biosynthesis</keyword>
<keyword id="KW-1185">Reference proteome</keyword>
<keyword id="KW-0808">Transferase</keyword>
<gene>
    <name evidence="1" type="primary">purH</name>
    <name type="ordered locus">MMAR_4542</name>
</gene>
<comment type="catalytic activity">
    <reaction evidence="1">
        <text>(6R)-10-formyltetrahydrofolate + 5-amino-1-(5-phospho-beta-D-ribosyl)imidazole-4-carboxamide = 5-formamido-1-(5-phospho-D-ribosyl)imidazole-4-carboxamide + (6S)-5,6,7,8-tetrahydrofolate</text>
        <dbReference type="Rhea" id="RHEA:22192"/>
        <dbReference type="ChEBI" id="CHEBI:57453"/>
        <dbReference type="ChEBI" id="CHEBI:58467"/>
        <dbReference type="ChEBI" id="CHEBI:58475"/>
        <dbReference type="ChEBI" id="CHEBI:195366"/>
        <dbReference type="EC" id="2.1.2.3"/>
    </reaction>
</comment>
<comment type="catalytic activity">
    <reaction evidence="1">
        <text>IMP + H2O = 5-formamido-1-(5-phospho-D-ribosyl)imidazole-4-carboxamide</text>
        <dbReference type="Rhea" id="RHEA:18445"/>
        <dbReference type="ChEBI" id="CHEBI:15377"/>
        <dbReference type="ChEBI" id="CHEBI:58053"/>
        <dbReference type="ChEBI" id="CHEBI:58467"/>
        <dbReference type="EC" id="3.5.4.10"/>
    </reaction>
</comment>
<comment type="pathway">
    <text evidence="1">Purine metabolism; IMP biosynthesis via de novo pathway; 5-formamido-1-(5-phospho-D-ribosyl)imidazole-4-carboxamide from 5-amino-1-(5-phospho-D-ribosyl)imidazole-4-carboxamide (10-formyl THF route): step 1/1.</text>
</comment>
<comment type="pathway">
    <text evidence="1">Purine metabolism; IMP biosynthesis via de novo pathway; IMP from 5-formamido-1-(5-phospho-D-ribosyl)imidazole-4-carboxamide: step 1/1.</text>
</comment>
<comment type="domain">
    <text evidence="1">The IMP cyclohydrolase activity resides in the N-terminal region.</text>
</comment>
<comment type="similarity">
    <text evidence="1">Belongs to the PurH family.</text>
</comment>
<dbReference type="EC" id="2.1.2.3" evidence="1"/>
<dbReference type="EC" id="3.5.4.10" evidence="1"/>
<dbReference type="EMBL" id="CP000854">
    <property type="protein sequence ID" value="ACC42948.1"/>
    <property type="molecule type" value="Genomic_DNA"/>
</dbReference>
<dbReference type="RefSeq" id="WP_012396092.1">
    <property type="nucleotide sequence ID" value="NC_010612.1"/>
</dbReference>
<dbReference type="SMR" id="B2HEC3"/>
<dbReference type="STRING" id="216594.MMAR_4542"/>
<dbReference type="KEGG" id="mmi:MMAR_4542"/>
<dbReference type="eggNOG" id="COG0138">
    <property type="taxonomic scope" value="Bacteria"/>
</dbReference>
<dbReference type="HOGENOM" id="CLU_016316_5_2_11"/>
<dbReference type="OrthoDB" id="9802065at2"/>
<dbReference type="UniPathway" id="UPA00074">
    <property type="reaction ID" value="UER00133"/>
</dbReference>
<dbReference type="UniPathway" id="UPA00074">
    <property type="reaction ID" value="UER00135"/>
</dbReference>
<dbReference type="Proteomes" id="UP000001190">
    <property type="component" value="Chromosome"/>
</dbReference>
<dbReference type="GO" id="GO:0005829">
    <property type="term" value="C:cytosol"/>
    <property type="evidence" value="ECO:0007669"/>
    <property type="project" value="TreeGrafter"/>
</dbReference>
<dbReference type="GO" id="GO:0003937">
    <property type="term" value="F:IMP cyclohydrolase activity"/>
    <property type="evidence" value="ECO:0007669"/>
    <property type="project" value="UniProtKB-UniRule"/>
</dbReference>
<dbReference type="GO" id="GO:0004643">
    <property type="term" value="F:phosphoribosylaminoimidazolecarboxamide formyltransferase activity"/>
    <property type="evidence" value="ECO:0007669"/>
    <property type="project" value="UniProtKB-UniRule"/>
</dbReference>
<dbReference type="GO" id="GO:0006189">
    <property type="term" value="P:'de novo' IMP biosynthetic process"/>
    <property type="evidence" value="ECO:0007669"/>
    <property type="project" value="UniProtKB-UniRule"/>
</dbReference>
<dbReference type="CDD" id="cd01421">
    <property type="entry name" value="IMPCH"/>
    <property type="match status" value="1"/>
</dbReference>
<dbReference type="FunFam" id="3.40.140.20:FF:000001">
    <property type="entry name" value="Bifunctional purine biosynthesis protein PurH"/>
    <property type="match status" value="1"/>
</dbReference>
<dbReference type="FunFam" id="3.40.140.20:FF:000002">
    <property type="entry name" value="Bifunctional purine biosynthesis protein PurH"/>
    <property type="match status" value="1"/>
</dbReference>
<dbReference type="FunFam" id="3.40.50.1380:FF:000001">
    <property type="entry name" value="Bifunctional purine biosynthesis protein PurH"/>
    <property type="match status" value="1"/>
</dbReference>
<dbReference type="Gene3D" id="3.40.140.20">
    <property type="match status" value="2"/>
</dbReference>
<dbReference type="Gene3D" id="3.40.50.1380">
    <property type="entry name" value="Methylglyoxal synthase-like domain"/>
    <property type="match status" value="1"/>
</dbReference>
<dbReference type="HAMAP" id="MF_00139">
    <property type="entry name" value="PurH"/>
    <property type="match status" value="1"/>
</dbReference>
<dbReference type="InterPro" id="IPR024051">
    <property type="entry name" value="AICAR_Tfase_dup_dom_sf"/>
</dbReference>
<dbReference type="InterPro" id="IPR016193">
    <property type="entry name" value="Cytidine_deaminase-like"/>
</dbReference>
<dbReference type="InterPro" id="IPR011607">
    <property type="entry name" value="MGS-like_dom"/>
</dbReference>
<dbReference type="InterPro" id="IPR036914">
    <property type="entry name" value="MGS-like_dom_sf"/>
</dbReference>
<dbReference type="InterPro" id="IPR002695">
    <property type="entry name" value="PurH-like"/>
</dbReference>
<dbReference type="NCBIfam" id="NF002049">
    <property type="entry name" value="PRK00881.1"/>
    <property type="match status" value="1"/>
</dbReference>
<dbReference type="NCBIfam" id="TIGR00355">
    <property type="entry name" value="purH"/>
    <property type="match status" value="1"/>
</dbReference>
<dbReference type="PANTHER" id="PTHR11692:SF0">
    <property type="entry name" value="BIFUNCTIONAL PURINE BIOSYNTHESIS PROTEIN ATIC"/>
    <property type="match status" value="1"/>
</dbReference>
<dbReference type="PANTHER" id="PTHR11692">
    <property type="entry name" value="BIFUNCTIONAL PURINE BIOSYNTHESIS PROTEIN PURH"/>
    <property type="match status" value="1"/>
</dbReference>
<dbReference type="Pfam" id="PF01808">
    <property type="entry name" value="AICARFT_IMPCHas"/>
    <property type="match status" value="1"/>
</dbReference>
<dbReference type="Pfam" id="PF02142">
    <property type="entry name" value="MGS"/>
    <property type="match status" value="1"/>
</dbReference>
<dbReference type="PIRSF" id="PIRSF000414">
    <property type="entry name" value="AICARFT_IMPCHas"/>
    <property type="match status" value="1"/>
</dbReference>
<dbReference type="SMART" id="SM00798">
    <property type="entry name" value="AICARFT_IMPCHas"/>
    <property type="match status" value="1"/>
</dbReference>
<dbReference type="SMART" id="SM00851">
    <property type="entry name" value="MGS"/>
    <property type="match status" value="1"/>
</dbReference>
<dbReference type="SUPFAM" id="SSF53927">
    <property type="entry name" value="Cytidine deaminase-like"/>
    <property type="match status" value="1"/>
</dbReference>
<dbReference type="SUPFAM" id="SSF52335">
    <property type="entry name" value="Methylglyoxal synthase-like"/>
    <property type="match status" value="1"/>
</dbReference>
<dbReference type="PROSITE" id="PS51855">
    <property type="entry name" value="MGS"/>
    <property type="match status" value="1"/>
</dbReference>
<sequence>MSTDHIRRPIRRALISVYDKTGLVDLAQGLTAAGVEIVSTGSTAKTIASKGIPVTRVEELTGFPEVLDGRVKTLHPRVHAGLLADLRNPEHEAALAELGVEAFELVVVNLYPFSQTVESGASVDECVEQIDIGGPSMVRAAAKNHPSVAVVTDPQGYDGVLAAVSSGGFTLAERKKLASLAFQHTAEYDIAVASWMQSTVAPEQPETDFPRWFGRNWRRQAMLRYGENPHQQAALYADPGAWPGLAQAEQLHGKEMSYNNFTDADAAWRAAFDHEQKCVAIIKHANPCGIAISEVSVADAHRKAHACDPLSAYGGVIACNTEVSPEMAEYVSTIFTEVIVAPAYAPAALDQLTKKKNIRVLVASEPQDGGAELRPISGGLLMQQRDQLDAAGDNPANWTLATGSPADPATLTDLVFAWRSCRAVKSNAIVIVADGATIGVGMGQVNRVDAARLAVERGGERVNGAVAASDAFFPFPDGLETLTAAGVKAIVHPGGSVRDEEVTAAAAKAGITLYLTGSRHFAH</sequence>
<name>PUR9_MYCMM</name>